<proteinExistence type="inferred from homology"/>
<feature type="chain" id="PRO_1000205838" description="Large ribosomal subunit protein bL34">
    <location>
        <begin position="1"/>
        <end position="44"/>
    </location>
</feature>
<feature type="region of interest" description="Disordered" evidence="2">
    <location>
        <begin position="1"/>
        <end position="44"/>
    </location>
</feature>
<feature type="compositionally biased region" description="Basic residues" evidence="2">
    <location>
        <begin position="30"/>
        <end position="44"/>
    </location>
</feature>
<gene>
    <name evidence="1" type="primary">rpmH</name>
    <name type="ordered locus">RPR_03620</name>
</gene>
<protein>
    <recommendedName>
        <fullName evidence="1">Large ribosomal subunit protein bL34</fullName>
    </recommendedName>
    <alternativeName>
        <fullName evidence="3">50S ribosomal protein L34</fullName>
    </alternativeName>
</protein>
<sequence>MKRTFQPSNLVRKRRHGFRSRMATPTGRAILRKRRAKGRHKLSA</sequence>
<comment type="similarity">
    <text evidence="1">Belongs to the bacterial ribosomal protein bL34 family.</text>
</comment>
<dbReference type="EMBL" id="CP001227">
    <property type="protein sequence ID" value="ACR47460.1"/>
    <property type="molecule type" value="Genomic_DNA"/>
</dbReference>
<dbReference type="RefSeq" id="WP_011270688.1">
    <property type="nucleotide sequence ID" value="NC_012730.1"/>
</dbReference>
<dbReference type="SMR" id="C4K1K9"/>
<dbReference type="GeneID" id="34514635"/>
<dbReference type="KEGG" id="rpk:RPR_03620"/>
<dbReference type="HOGENOM" id="CLU_129938_2_0_5"/>
<dbReference type="Proteomes" id="UP000005015">
    <property type="component" value="Chromosome"/>
</dbReference>
<dbReference type="GO" id="GO:1990904">
    <property type="term" value="C:ribonucleoprotein complex"/>
    <property type="evidence" value="ECO:0007669"/>
    <property type="project" value="UniProtKB-KW"/>
</dbReference>
<dbReference type="GO" id="GO:0005840">
    <property type="term" value="C:ribosome"/>
    <property type="evidence" value="ECO:0007669"/>
    <property type="project" value="UniProtKB-KW"/>
</dbReference>
<dbReference type="GO" id="GO:0003735">
    <property type="term" value="F:structural constituent of ribosome"/>
    <property type="evidence" value="ECO:0007669"/>
    <property type="project" value="InterPro"/>
</dbReference>
<dbReference type="GO" id="GO:0006412">
    <property type="term" value="P:translation"/>
    <property type="evidence" value="ECO:0007669"/>
    <property type="project" value="UniProtKB-UniRule"/>
</dbReference>
<dbReference type="FunFam" id="1.10.287.3980:FF:000001">
    <property type="entry name" value="Mitochondrial ribosomal protein L34"/>
    <property type="match status" value="1"/>
</dbReference>
<dbReference type="Gene3D" id="1.10.287.3980">
    <property type="match status" value="1"/>
</dbReference>
<dbReference type="HAMAP" id="MF_00391">
    <property type="entry name" value="Ribosomal_bL34"/>
    <property type="match status" value="1"/>
</dbReference>
<dbReference type="InterPro" id="IPR000271">
    <property type="entry name" value="Ribosomal_bL34"/>
</dbReference>
<dbReference type="InterPro" id="IPR020939">
    <property type="entry name" value="Ribosomal_bL34_CS"/>
</dbReference>
<dbReference type="NCBIfam" id="TIGR01030">
    <property type="entry name" value="rpmH_bact"/>
    <property type="match status" value="1"/>
</dbReference>
<dbReference type="PANTHER" id="PTHR14503:SF4">
    <property type="entry name" value="LARGE RIBOSOMAL SUBUNIT PROTEIN BL34M"/>
    <property type="match status" value="1"/>
</dbReference>
<dbReference type="PANTHER" id="PTHR14503">
    <property type="entry name" value="MITOCHONDRIAL RIBOSOMAL PROTEIN 34 FAMILY MEMBER"/>
    <property type="match status" value="1"/>
</dbReference>
<dbReference type="Pfam" id="PF00468">
    <property type="entry name" value="Ribosomal_L34"/>
    <property type="match status" value="1"/>
</dbReference>
<dbReference type="PROSITE" id="PS00784">
    <property type="entry name" value="RIBOSOMAL_L34"/>
    <property type="match status" value="1"/>
</dbReference>
<evidence type="ECO:0000255" key="1">
    <source>
        <dbReference type="HAMAP-Rule" id="MF_00391"/>
    </source>
</evidence>
<evidence type="ECO:0000256" key="2">
    <source>
        <dbReference type="SAM" id="MobiDB-lite"/>
    </source>
</evidence>
<evidence type="ECO:0000305" key="3"/>
<organism>
    <name type="scientific">Rickettsia peacockii (strain Rustic)</name>
    <dbReference type="NCBI Taxonomy" id="562019"/>
    <lineage>
        <taxon>Bacteria</taxon>
        <taxon>Pseudomonadati</taxon>
        <taxon>Pseudomonadota</taxon>
        <taxon>Alphaproteobacteria</taxon>
        <taxon>Rickettsiales</taxon>
        <taxon>Rickettsiaceae</taxon>
        <taxon>Rickettsieae</taxon>
        <taxon>Rickettsia</taxon>
        <taxon>spotted fever group</taxon>
    </lineage>
</organism>
<reference key="1">
    <citation type="journal article" date="2009" name="PLoS ONE">
        <title>Genome sequence of the endosymbiont Rickettsia peacockii and comparison with virulent Rickettsia rickettsii: identification of virulence factors.</title>
        <authorList>
            <person name="Felsheim R.F."/>
            <person name="Kurtti T.J."/>
            <person name="Munderloh U.G."/>
        </authorList>
    </citation>
    <scope>NUCLEOTIDE SEQUENCE [LARGE SCALE GENOMIC DNA]</scope>
    <source>
        <strain>Rustic</strain>
    </source>
</reference>
<accession>C4K1K9</accession>
<keyword id="KW-0687">Ribonucleoprotein</keyword>
<keyword id="KW-0689">Ribosomal protein</keyword>
<name>RL34_RICPU</name>